<proteinExistence type="inferred from homology"/>
<sequence length="173" mass="19412">MKGFGWLEGLLRVGRKLFVKAETVQYPEVRPYLPPRSRGRIVLTRDPDGQERCVACNLCAVACPVGCIDLAKAVAEDGRWYPEHFRINFARCIFCGYCEEACPTAAIQLTPDFELSEWRRDALVYDKHDLLIAGEGKVRGYRYWSVAGKAIQGKDKGEADHEAPPVDLKGLLP</sequence>
<gene>
    <name evidence="1" type="primary">nuoI1</name>
    <name type="ordered locus">RPE_1717</name>
</gene>
<name>NUOI1_RHOP5</name>
<feature type="chain" id="PRO_0000298543" description="NADH-quinone oxidoreductase subunit I 1">
    <location>
        <begin position="1"/>
        <end position="173"/>
    </location>
</feature>
<feature type="domain" description="4Fe-4S ferredoxin-type 1" evidence="1">
    <location>
        <begin position="41"/>
        <end position="73"/>
    </location>
</feature>
<feature type="domain" description="4Fe-4S ferredoxin-type 2" evidence="1">
    <location>
        <begin position="83"/>
        <end position="112"/>
    </location>
</feature>
<feature type="binding site" evidence="1">
    <location>
        <position position="53"/>
    </location>
    <ligand>
        <name>[4Fe-4S] cluster</name>
        <dbReference type="ChEBI" id="CHEBI:49883"/>
        <label>1</label>
    </ligand>
</feature>
<feature type="binding site" evidence="1">
    <location>
        <position position="56"/>
    </location>
    <ligand>
        <name>[4Fe-4S] cluster</name>
        <dbReference type="ChEBI" id="CHEBI:49883"/>
        <label>1</label>
    </ligand>
</feature>
<feature type="binding site" evidence="1">
    <location>
        <position position="59"/>
    </location>
    <ligand>
        <name>[4Fe-4S] cluster</name>
        <dbReference type="ChEBI" id="CHEBI:49883"/>
        <label>1</label>
    </ligand>
</feature>
<feature type="binding site" evidence="1">
    <location>
        <position position="63"/>
    </location>
    <ligand>
        <name>[4Fe-4S] cluster</name>
        <dbReference type="ChEBI" id="CHEBI:49883"/>
        <label>2</label>
    </ligand>
</feature>
<feature type="binding site" evidence="1">
    <location>
        <position position="92"/>
    </location>
    <ligand>
        <name>[4Fe-4S] cluster</name>
        <dbReference type="ChEBI" id="CHEBI:49883"/>
        <label>2</label>
    </ligand>
</feature>
<feature type="binding site" evidence="1">
    <location>
        <position position="95"/>
    </location>
    <ligand>
        <name>[4Fe-4S] cluster</name>
        <dbReference type="ChEBI" id="CHEBI:49883"/>
        <label>2</label>
    </ligand>
</feature>
<feature type="binding site" evidence="1">
    <location>
        <position position="98"/>
    </location>
    <ligand>
        <name>[4Fe-4S] cluster</name>
        <dbReference type="ChEBI" id="CHEBI:49883"/>
        <label>2</label>
    </ligand>
</feature>
<feature type="binding site" evidence="1">
    <location>
        <position position="102"/>
    </location>
    <ligand>
        <name>[4Fe-4S] cluster</name>
        <dbReference type="ChEBI" id="CHEBI:49883"/>
        <label>1</label>
    </ligand>
</feature>
<evidence type="ECO:0000255" key="1">
    <source>
        <dbReference type="HAMAP-Rule" id="MF_01351"/>
    </source>
</evidence>
<dbReference type="EC" id="7.1.1.-" evidence="1"/>
<dbReference type="EMBL" id="CP000463">
    <property type="protein sequence ID" value="ABJ05666.1"/>
    <property type="molecule type" value="Genomic_DNA"/>
</dbReference>
<dbReference type="SMR" id="Q07QW8"/>
<dbReference type="STRING" id="316055.RPE_1717"/>
<dbReference type="KEGG" id="rpe:RPE_1717"/>
<dbReference type="eggNOG" id="COG1143">
    <property type="taxonomic scope" value="Bacteria"/>
</dbReference>
<dbReference type="HOGENOM" id="CLU_067218_4_3_5"/>
<dbReference type="OrthoDB" id="9808559at2"/>
<dbReference type="GO" id="GO:0005886">
    <property type="term" value="C:plasma membrane"/>
    <property type="evidence" value="ECO:0007669"/>
    <property type="project" value="UniProtKB-SubCell"/>
</dbReference>
<dbReference type="GO" id="GO:0051539">
    <property type="term" value="F:4 iron, 4 sulfur cluster binding"/>
    <property type="evidence" value="ECO:0007669"/>
    <property type="project" value="UniProtKB-KW"/>
</dbReference>
<dbReference type="GO" id="GO:0005506">
    <property type="term" value="F:iron ion binding"/>
    <property type="evidence" value="ECO:0007669"/>
    <property type="project" value="UniProtKB-UniRule"/>
</dbReference>
<dbReference type="GO" id="GO:0050136">
    <property type="term" value="F:NADH:ubiquinone reductase (non-electrogenic) activity"/>
    <property type="evidence" value="ECO:0007669"/>
    <property type="project" value="UniProtKB-UniRule"/>
</dbReference>
<dbReference type="GO" id="GO:0048038">
    <property type="term" value="F:quinone binding"/>
    <property type="evidence" value="ECO:0007669"/>
    <property type="project" value="UniProtKB-KW"/>
</dbReference>
<dbReference type="GO" id="GO:0009060">
    <property type="term" value="P:aerobic respiration"/>
    <property type="evidence" value="ECO:0007669"/>
    <property type="project" value="TreeGrafter"/>
</dbReference>
<dbReference type="FunFam" id="3.30.70.3270:FF:000002">
    <property type="entry name" value="NADH-quinone oxidoreductase subunit I"/>
    <property type="match status" value="1"/>
</dbReference>
<dbReference type="Gene3D" id="3.30.70.3270">
    <property type="match status" value="1"/>
</dbReference>
<dbReference type="HAMAP" id="MF_01351">
    <property type="entry name" value="NDH1_NuoI"/>
    <property type="match status" value="1"/>
</dbReference>
<dbReference type="InterPro" id="IPR017896">
    <property type="entry name" value="4Fe4S_Fe-S-bd"/>
</dbReference>
<dbReference type="InterPro" id="IPR017900">
    <property type="entry name" value="4Fe4S_Fe_S_CS"/>
</dbReference>
<dbReference type="InterPro" id="IPR010226">
    <property type="entry name" value="NADH_quinone_OxRdtase_chainI"/>
</dbReference>
<dbReference type="NCBIfam" id="TIGR01971">
    <property type="entry name" value="NuoI"/>
    <property type="match status" value="1"/>
</dbReference>
<dbReference type="NCBIfam" id="NF004536">
    <property type="entry name" value="PRK05888.1-1"/>
    <property type="match status" value="1"/>
</dbReference>
<dbReference type="PANTHER" id="PTHR10849:SF20">
    <property type="entry name" value="NADH DEHYDROGENASE [UBIQUINONE] IRON-SULFUR PROTEIN 8, MITOCHONDRIAL"/>
    <property type="match status" value="1"/>
</dbReference>
<dbReference type="PANTHER" id="PTHR10849">
    <property type="entry name" value="NADH DEHYDROGENASE UBIQUINONE IRON-SULFUR PROTEIN 8, MITOCHONDRIAL"/>
    <property type="match status" value="1"/>
</dbReference>
<dbReference type="Pfam" id="PF12838">
    <property type="entry name" value="Fer4_7"/>
    <property type="match status" value="1"/>
</dbReference>
<dbReference type="SUPFAM" id="SSF54862">
    <property type="entry name" value="4Fe-4S ferredoxins"/>
    <property type="match status" value="1"/>
</dbReference>
<dbReference type="PROSITE" id="PS00198">
    <property type="entry name" value="4FE4S_FER_1"/>
    <property type="match status" value="2"/>
</dbReference>
<dbReference type="PROSITE" id="PS51379">
    <property type="entry name" value="4FE4S_FER_2"/>
    <property type="match status" value="2"/>
</dbReference>
<organism>
    <name type="scientific">Rhodopseudomonas palustris (strain BisA53)</name>
    <dbReference type="NCBI Taxonomy" id="316055"/>
    <lineage>
        <taxon>Bacteria</taxon>
        <taxon>Pseudomonadati</taxon>
        <taxon>Pseudomonadota</taxon>
        <taxon>Alphaproteobacteria</taxon>
        <taxon>Hyphomicrobiales</taxon>
        <taxon>Nitrobacteraceae</taxon>
        <taxon>Rhodopseudomonas</taxon>
    </lineage>
</organism>
<protein>
    <recommendedName>
        <fullName evidence="1">NADH-quinone oxidoreductase subunit I 1</fullName>
        <ecNumber evidence="1">7.1.1.-</ecNumber>
    </recommendedName>
    <alternativeName>
        <fullName evidence="1">NADH dehydrogenase I subunit I 1</fullName>
    </alternativeName>
    <alternativeName>
        <fullName evidence="1">NDH-1 subunit I 1</fullName>
    </alternativeName>
</protein>
<comment type="function">
    <text evidence="1">NDH-1 shuttles electrons from NADH, via FMN and iron-sulfur (Fe-S) centers, to quinones in the respiratory chain. The immediate electron acceptor for the enzyme in this species is believed to be ubiquinone. Couples the redox reaction to proton translocation (for every two electrons transferred, four hydrogen ions are translocated across the cytoplasmic membrane), and thus conserves the redox energy in a proton gradient.</text>
</comment>
<comment type="catalytic activity">
    <reaction evidence="1">
        <text>a quinone + NADH + 5 H(+)(in) = a quinol + NAD(+) + 4 H(+)(out)</text>
        <dbReference type="Rhea" id="RHEA:57888"/>
        <dbReference type="ChEBI" id="CHEBI:15378"/>
        <dbReference type="ChEBI" id="CHEBI:24646"/>
        <dbReference type="ChEBI" id="CHEBI:57540"/>
        <dbReference type="ChEBI" id="CHEBI:57945"/>
        <dbReference type="ChEBI" id="CHEBI:132124"/>
    </reaction>
</comment>
<comment type="cofactor">
    <cofactor evidence="1">
        <name>[4Fe-4S] cluster</name>
        <dbReference type="ChEBI" id="CHEBI:49883"/>
    </cofactor>
    <text evidence="1">Binds 2 [4Fe-4S] clusters per subunit.</text>
</comment>
<comment type="subunit">
    <text evidence="1">NDH-1 is composed of 14 different subunits. Subunits NuoA, H, J, K, L, M, N constitute the membrane sector of the complex.</text>
</comment>
<comment type="subcellular location">
    <subcellularLocation>
        <location evidence="1">Cell inner membrane</location>
        <topology evidence="1">Peripheral membrane protein</topology>
    </subcellularLocation>
</comment>
<comment type="similarity">
    <text evidence="1">Belongs to the complex I 23 kDa subunit family.</text>
</comment>
<keyword id="KW-0004">4Fe-4S</keyword>
<keyword id="KW-0997">Cell inner membrane</keyword>
<keyword id="KW-1003">Cell membrane</keyword>
<keyword id="KW-0408">Iron</keyword>
<keyword id="KW-0411">Iron-sulfur</keyword>
<keyword id="KW-0472">Membrane</keyword>
<keyword id="KW-0479">Metal-binding</keyword>
<keyword id="KW-0520">NAD</keyword>
<keyword id="KW-0874">Quinone</keyword>
<keyword id="KW-0677">Repeat</keyword>
<keyword id="KW-1278">Translocase</keyword>
<keyword id="KW-0830">Ubiquinone</keyword>
<reference key="1">
    <citation type="submission" date="2006-09" db="EMBL/GenBank/DDBJ databases">
        <title>Complete sequence of Rhodopseudomonas palustris BisA53.</title>
        <authorList>
            <consortium name="US DOE Joint Genome Institute"/>
            <person name="Copeland A."/>
            <person name="Lucas S."/>
            <person name="Lapidus A."/>
            <person name="Barry K."/>
            <person name="Detter J.C."/>
            <person name="Glavina del Rio T."/>
            <person name="Hammon N."/>
            <person name="Israni S."/>
            <person name="Dalin E."/>
            <person name="Tice H."/>
            <person name="Pitluck S."/>
            <person name="Chain P."/>
            <person name="Malfatti S."/>
            <person name="Shin M."/>
            <person name="Vergez L."/>
            <person name="Schmutz J."/>
            <person name="Larimer F."/>
            <person name="Land M."/>
            <person name="Hauser L."/>
            <person name="Pelletier D.A."/>
            <person name="Kyrpides N."/>
            <person name="Kim E."/>
            <person name="Harwood C.S."/>
            <person name="Oda Y."/>
            <person name="Richardson P."/>
        </authorList>
    </citation>
    <scope>NUCLEOTIDE SEQUENCE [LARGE SCALE GENOMIC DNA]</scope>
    <source>
        <strain>BisA53</strain>
    </source>
</reference>
<accession>Q07QW8</accession>